<organism>
    <name type="scientific">Claviceps purpurea (strain 20.1)</name>
    <name type="common">Ergot fungus</name>
    <name type="synonym">Sphacelia segetum</name>
    <dbReference type="NCBI Taxonomy" id="1111077"/>
    <lineage>
        <taxon>Eukaryota</taxon>
        <taxon>Fungi</taxon>
        <taxon>Dikarya</taxon>
        <taxon>Ascomycota</taxon>
        <taxon>Pezizomycotina</taxon>
        <taxon>Sordariomycetes</taxon>
        <taxon>Hypocreomycetidae</taxon>
        <taxon>Hypocreales</taxon>
        <taxon>Clavicipitaceae</taxon>
        <taxon>Claviceps</taxon>
    </lineage>
</organism>
<comment type="function">
    <text evidence="3 4 6 7">Short chain dehydrogenase; part of the ergochrome gene cluster responsible for the typical purple-black color of the ergot sclerotia (PubMed:28955461). The ergochrome gene cluster produces several ergot pigments including the yellow ergochrome secalonic acid and its derivatives, as well as the red anthraquinones endocrocin and clavorubin (PubMed:28955461). The pathway begins with the synthesis of atrochrysone thioester by the polyketide synthase (PKS) CPUR_05437 (By similarity). The atrochrysone carboxyl ACP thioesterase CPUR_05436 then breaks the thioester bond and releases the atrochrysone carboxylic acid from CPUR_05437 (By similarity). The atrochrysone carboxylic acid is then converted to atrochrysone which is further transformed into emodin anthrone (By similarity). The next step is performed by the anthrone oxygenase CPUR_05434 that catalyzes the oxidation of emodinanthrone to emodin (By similarity). Emodin is further modified to yield monodictyphenone via several steps involving CPUR_05427, CPUR_05428, CPUR_05429 and CPUR_05430 (By similarity). The short chain dehydrogenase/reductase CPUR_05418 then catalyzes the C-5 ketoreduction to give the xanthone skeleton of the monomeric units (PubMed:32105084). Ergochromes formation requires further dimerization steps of different xanthone units, probably catalyzed by the cytochrome P450 monooxygenase CPUR_05419 (PubMed:28955461). CPUR_05425, CPUR_05426 and CPUR_05431 are unique to Claviceps, thus it is likely that they are involved in further modification of xanthone units or in their dimerization (PubMed:28955461). The yellow ergochromes and the red anthraquinone pigments endocrocin and clavorubin are products from the same PKS derived precursors and the latter are likely shunt products in the pathway of xanthone biosynthesis (PubMed:28955461). It is proposed that atrochrysone carboxylic acid released from the PKS CPUR_05437 can also be converted to endocrocin anthrone which is further oxidized into endocrocin by CPUR_05435 (By similarity). Endocrocin could be then modified to clavorubin, possibly by CPUR_05423 and CPUR_05431 (PubMed:28955461). Clavorubin is the principal anthraquinone metabolite produced by the cluster with a much higher yield compared to endocrocin (PubMed:28955461).</text>
</comment>
<comment type="pathway">
    <text evidence="10">Pigment biosynthesis.</text>
</comment>
<comment type="induction">
    <text evidence="6">Expression correlates with the formation of the sclerotia and thus the pigment production and is directly regulated by the cluster-specific activator CPUR_05433 (PubMed:28955461).</text>
</comment>
<comment type="similarity">
    <text evidence="9">Belongs to the short-chain dehydrogenases/reductases (SDR) family.</text>
</comment>
<accession>M1W270</accession>
<evidence type="ECO:0000250" key="1">
    <source>
        <dbReference type="UniProtKB" id="L0E2Z4"/>
    </source>
</evidence>
<evidence type="ECO:0000250" key="2">
    <source>
        <dbReference type="UniProtKB" id="O93868"/>
    </source>
</evidence>
<evidence type="ECO:0000250" key="3">
    <source>
        <dbReference type="UniProtKB" id="Q4W944"/>
    </source>
</evidence>
<evidence type="ECO:0000250" key="4">
    <source>
        <dbReference type="UniProtKB" id="Q5BH34"/>
    </source>
</evidence>
<evidence type="ECO:0000255" key="5">
    <source>
        <dbReference type="PROSITE-ProRule" id="PRU10001"/>
    </source>
</evidence>
<evidence type="ECO:0000269" key="6">
    <source>
    </source>
</evidence>
<evidence type="ECO:0000269" key="7">
    <source>
    </source>
</evidence>
<evidence type="ECO:0000303" key="8">
    <source>
    </source>
</evidence>
<evidence type="ECO:0000305" key="9"/>
<evidence type="ECO:0000305" key="10">
    <source>
    </source>
</evidence>
<protein>
    <recommendedName>
        <fullName evidence="8">Short chain dehydrogenase CPUR_05429</fullName>
        <ecNumber evidence="10">1.1.1.-</ecNumber>
    </recommendedName>
    <alternativeName>
        <fullName evidence="8">Ergochrome gene cluster protein CPUR_05429</fullName>
    </alternativeName>
</protein>
<reference key="1">
    <citation type="journal article" date="2013" name="PLoS Genet.">
        <title>Plant-symbiotic fungi as chemical engineers: Multi-genome analysis of the Clavicipitaceae reveals dynamics of alkaloid loci.</title>
        <authorList>
            <person name="Schardl C.L."/>
            <person name="Young C.A."/>
            <person name="Hesse U."/>
            <person name="Amyotte S.G."/>
            <person name="Andreeva K."/>
            <person name="Calie P.J."/>
            <person name="Fleetwood D.J."/>
            <person name="Haws D.C."/>
            <person name="Moore N."/>
            <person name="Oeser B."/>
            <person name="Panaccione D.G."/>
            <person name="Schweri K.K."/>
            <person name="Voisey C.R."/>
            <person name="Farman M.L."/>
            <person name="Jaromczyk J.W."/>
            <person name="Roe B.A."/>
            <person name="O'Sullivan D.M."/>
            <person name="Scott B."/>
            <person name="Tudzynski P."/>
            <person name="An Z."/>
            <person name="Arnaoudova E.G."/>
            <person name="Bullock C.T."/>
            <person name="Charlton N.D."/>
            <person name="Chen L."/>
            <person name="Cox M."/>
            <person name="Dinkins R.D."/>
            <person name="Florea S."/>
            <person name="Glenn A.E."/>
            <person name="Gordon A."/>
            <person name="Gueldener U."/>
            <person name="Harris D.R."/>
            <person name="Hollin W."/>
            <person name="Jaromczyk J."/>
            <person name="Johnson R.D."/>
            <person name="Khan A.K."/>
            <person name="Leistner E."/>
            <person name="Leuchtmann A."/>
            <person name="Li C."/>
            <person name="Liu J."/>
            <person name="Liu J."/>
            <person name="Liu M."/>
            <person name="Mace W."/>
            <person name="Machado C."/>
            <person name="Nagabhyru P."/>
            <person name="Pan J."/>
            <person name="Schmid J."/>
            <person name="Sugawara K."/>
            <person name="Steiner U."/>
            <person name="Takach J.E."/>
            <person name="Tanaka E."/>
            <person name="Webb J.S."/>
            <person name="Wilson E.V."/>
            <person name="Wiseman J.L."/>
            <person name="Yoshida R."/>
            <person name="Zeng Z."/>
        </authorList>
    </citation>
    <scope>NUCLEOTIDE SEQUENCE [LARGE SCALE GENOMIC DNA]</scope>
    <source>
        <strain>20.1</strain>
    </source>
</reference>
<reference key="2">
    <citation type="journal article" date="2016" name="Fungal Biol. Biotechnol.">
        <title>Identification and characterization of the ergochrome gene cluster in the plant pathogenic fungus Claviceps purpurea.</title>
        <authorList>
            <person name="Neubauer L."/>
            <person name="Dopstadt J."/>
            <person name="Humpf H.U."/>
            <person name="Tudzynski P."/>
        </authorList>
    </citation>
    <scope>FUNCTION</scope>
    <scope>INDUCTION</scope>
</reference>
<reference key="3">
    <citation type="journal article" date="2020" name="Org. Lett.">
        <title>Unraveling the fungal strategy for tetrahydroxanthone biosynthesis and diversification.</title>
        <authorList>
            <person name="Wei X."/>
            <person name="Matsuda Y."/>
        </authorList>
    </citation>
    <scope>FUNCTION</scope>
</reference>
<proteinExistence type="evidence at transcript level"/>
<sequence length="264" mass="28124">MSETHIPYRLDGKIALVTGSGRGIGAAMAVELGRLGAKVVVNYVNSVESAEKVVDEIKGLGSDAVAIQADVRQVSQIVELMDKAVKHFGGLDIVCSNSGVVSFGHFGDVTEEEFDRVFSLNTRGQFFVAREAYRHLNNGGRIILMSSNTAKDLSVPKHSLYSGSKGAIDSFVRIFSKDAGDKKITVNAVAPGGTVTDMFHSCSQHYIPGGDKYTAEERQAMAAHASPLTRNGFPLDIAKVVCFLASDEAEWVNGKVLTLDGGAA</sequence>
<gene>
    <name type="ORF">CPUR_05429</name>
</gene>
<keyword id="KW-0521">NADP</keyword>
<keyword id="KW-0560">Oxidoreductase</keyword>
<keyword id="KW-1185">Reference proteome</keyword>
<name>PIG7_CLAP2</name>
<dbReference type="EC" id="1.1.1.-" evidence="10"/>
<dbReference type="EMBL" id="CAGA01000032">
    <property type="protein sequence ID" value="CCE31576.1"/>
    <property type="molecule type" value="Genomic_DNA"/>
</dbReference>
<dbReference type="SMR" id="M1W270"/>
<dbReference type="STRING" id="1111077.M1W270"/>
<dbReference type="VEuPathDB" id="FungiDB:CPUR_05429"/>
<dbReference type="eggNOG" id="KOG0725">
    <property type="taxonomic scope" value="Eukaryota"/>
</dbReference>
<dbReference type="HOGENOM" id="CLU_010194_1_3_1"/>
<dbReference type="OrthoDB" id="47007at2759"/>
<dbReference type="PhylomeDB" id="M1W270"/>
<dbReference type="Proteomes" id="UP000016801">
    <property type="component" value="Unassembled WGS sequence"/>
</dbReference>
<dbReference type="GO" id="GO:0016614">
    <property type="term" value="F:oxidoreductase activity, acting on CH-OH group of donors"/>
    <property type="evidence" value="ECO:0007669"/>
    <property type="project" value="UniProtKB-ARBA"/>
</dbReference>
<dbReference type="FunFam" id="3.40.50.720:FF:000084">
    <property type="entry name" value="Short-chain dehydrogenase reductase"/>
    <property type="match status" value="1"/>
</dbReference>
<dbReference type="Gene3D" id="3.40.50.720">
    <property type="entry name" value="NAD(P)-binding Rossmann-like Domain"/>
    <property type="match status" value="1"/>
</dbReference>
<dbReference type="InterPro" id="IPR036291">
    <property type="entry name" value="NAD(P)-bd_dom_sf"/>
</dbReference>
<dbReference type="InterPro" id="IPR020904">
    <property type="entry name" value="Sc_DH/Rdtase_CS"/>
</dbReference>
<dbReference type="InterPro" id="IPR002347">
    <property type="entry name" value="SDR_fam"/>
</dbReference>
<dbReference type="PANTHER" id="PTHR48107">
    <property type="entry name" value="NADPH-DEPENDENT ALDEHYDE REDUCTASE-LIKE PROTEIN, CHLOROPLASTIC-RELATED"/>
    <property type="match status" value="1"/>
</dbReference>
<dbReference type="PANTHER" id="PTHR48107:SF7">
    <property type="entry name" value="RE15974P"/>
    <property type="match status" value="1"/>
</dbReference>
<dbReference type="Pfam" id="PF13561">
    <property type="entry name" value="adh_short_C2"/>
    <property type="match status" value="1"/>
</dbReference>
<dbReference type="PRINTS" id="PR00081">
    <property type="entry name" value="GDHRDH"/>
</dbReference>
<dbReference type="PRINTS" id="PR00080">
    <property type="entry name" value="SDRFAMILY"/>
</dbReference>
<dbReference type="SUPFAM" id="SSF51735">
    <property type="entry name" value="NAD(P)-binding Rossmann-fold domains"/>
    <property type="match status" value="1"/>
</dbReference>
<dbReference type="PROSITE" id="PS00061">
    <property type="entry name" value="ADH_SHORT"/>
    <property type="match status" value="1"/>
</dbReference>
<feature type="chain" id="PRO_0000443980" description="Short chain dehydrogenase CPUR_05429">
    <location>
        <begin position="1"/>
        <end position="264"/>
    </location>
</feature>
<feature type="active site" description="Proton donor" evidence="2">
    <location>
        <position position="146"/>
    </location>
</feature>
<feature type="active site" description="Proton donor" evidence="2">
    <location>
        <position position="147"/>
    </location>
</feature>
<feature type="active site" description="Proton acceptor" evidence="5">
    <location>
        <position position="161"/>
    </location>
</feature>
<feature type="active site" description="Lowers pKa of active site Tyr" evidence="2">
    <location>
        <position position="165"/>
    </location>
</feature>
<feature type="binding site" evidence="1">
    <location>
        <position position="24"/>
    </location>
    <ligand>
        <name>NADP(+)</name>
        <dbReference type="ChEBI" id="CHEBI:58349"/>
    </ligand>
</feature>
<feature type="binding site" evidence="1">
    <location>
        <position position="70"/>
    </location>
    <ligand>
        <name>NADP(+)</name>
        <dbReference type="ChEBI" id="CHEBI:58349"/>
    </ligand>
</feature>
<feature type="binding site" evidence="2">
    <location>
        <position position="97"/>
    </location>
    <ligand>
        <name>NADP(+)</name>
        <dbReference type="ChEBI" id="CHEBI:58349"/>
    </ligand>
</feature>
<feature type="binding site" evidence="1">
    <location>
        <position position="130"/>
    </location>
    <ligand>
        <name>NADP(+)</name>
        <dbReference type="ChEBI" id="CHEBI:58349"/>
    </ligand>
</feature>
<feature type="binding site" evidence="2">
    <location>
        <position position="161"/>
    </location>
    <ligand>
        <name>NADP(+)</name>
        <dbReference type="ChEBI" id="CHEBI:58349"/>
    </ligand>
</feature>
<feature type="binding site" evidence="2">
    <location>
        <position position="165"/>
    </location>
    <ligand>
        <name>NADP(+)</name>
        <dbReference type="ChEBI" id="CHEBI:58349"/>
    </ligand>
</feature>
<feature type="binding site" evidence="1">
    <location>
        <position position="196"/>
    </location>
    <ligand>
        <name>NADP(+)</name>
        <dbReference type="ChEBI" id="CHEBI:58349"/>
    </ligand>
</feature>